<protein>
    <recommendedName>
        <fullName>Uncharacterized protein YkzU</fullName>
    </recommendedName>
</protein>
<keyword id="KW-1185">Reference proteome</keyword>
<name>YKZU_BACSU</name>
<feature type="chain" id="PRO_0000389219" description="Uncharacterized protein YkzU">
    <location>
        <begin position="1"/>
        <end position="172"/>
    </location>
</feature>
<accession>C0H408</accession>
<gene>
    <name type="primary">ykzU</name>
    <name type="ordered locus">BSU14072</name>
</gene>
<reference key="1">
    <citation type="journal article" date="1997" name="Nature">
        <title>The complete genome sequence of the Gram-positive bacterium Bacillus subtilis.</title>
        <authorList>
            <person name="Kunst F."/>
            <person name="Ogasawara N."/>
            <person name="Moszer I."/>
            <person name="Albertini A.M."/>
            <person name="Alloni G."/>
            <person name="Azevedo V."/>
            <person name="Bertero M.G."/>
            <person name="Bessieres P."/>
            <person name="Bolotin A."/>
            <person name="Borchert S."/>
            <person name="Borriss R."/>
            <person name="Boursier L."/>
            <person name="Brans A."/>
            <person name="Braun M."/>
            <person name="Brignell S.C."/>
            <person name="Bron S."/>
            <person name="Brouillet S."/>
            <person name="Bruschi C.V."/>
            <person name="Caldwell B."/>
            <person name="Capuano V."/>
            <person name="Carter N.M."/>
            <person name="Choi S.-K."/>
            <person name="Codani J.-J."/>
            <person name="Connerton I.F."/>
            <person name="Cummings N.J."/>
            <person name="Daniel R.A."/>
            <person name="Denizot F."/>
            <person name="Devine K.M."/>
            <person name="Duesterhoeft A."/>
            <person name="Ehrlich S.D."/>
            <person name="Emmerson P.T."/>
            <person name="Entian K.-D."/>
            <person name="Errington J."/>
            <person name="Fabret C."/>
            <person name="Ferrari E."/>
            <person name="Foulger D."/>
            <person name="Fritz C."/>
            <person name="Fujita M."/>
            <person name="Fujita Y."/>
            <person name="Fuma S."/>
            <person name="Galizzi A."/>
            <person name="Galleron N."/>
            <person name="Ghim S.-Y."/>
            <person name="Glaser P."/>
            <person name="Goffeau A."/>
            <person name="Golightly E.J."/>
            <person name="Grandi G."/>
            <person name="Guiseppi G."/>
            <person name="Guy B.J."/>
            <person name="Haga K."/>
            <person name="Haiech J."/>
            <person name="Harwood C.R."/>
            <person name="Henaut A."/>
            <person name="Hilbert H."/>
            <person name="Holsappel S."/>
            <person name="Hosono S."/>
            <person name="Hullo M.-F."/>
            <person name="Itaya M."/>
            <person name="Jones L.-M."/>
            <person name="Joris B."/>
            <person name="Karamata D."/>
            <person name="Kasahara Y."/>
            <person name="Klaerr-Blanchard M."/>
            <person name="Klein C."/>
            <person name="Kobayashi Y."/>
            <person name="Koetter P."/>
            <person name="Koningstein G."/>
            <person name="Krogh S."/>
            <person name="Kumano M."/>
            <person name="Kurita K."/>
            <person name="Lapidus A."/>
            <person name="Lardinois S."/>
            <person name="Lauber J."/>
            <person name="Lazarevic V."/>
            <person name="Lee S.-M."/>
            <person name="Levine A."/>
            <person name="Liu H."/>
            <person name="Masuda S."/>
            <person name="Mauel C."/>
            <person name="Medigue C."/>
            <person name="Medina N."/>
            <person name="Mellado R.P."/>
            <person name="Mizuno M."/>
            <person name="Moestl D."/>
            <person name="Nakai S."/>
            <person name="Noback M."/>
            <person name="Noone D."/>
            <person name="O'Reilly M."/>
            <person name="Ogawa K."/>
            <person name="Ogiwara A."/>
            <person name="Oudega B."/>
            <person name="Park S.-H."/>
            <person name="Parro V."/>
            <person name="Pohl T.M."/>
            <person name="Portetelle D."/>
            <person name="Porwollik S."/>
            <person name="Prescott A.M."/>
            <person name="Presecan E."/>
            <person name="Pujic P."/>
            <person name="Purnelle B."/>
            <person name="Rapoport G."/>
            <person name="Rey M."/>
            <person name="Reynolds S."/>
            <person name="Rieger M."/>
            <person name="Rivolta C."/>
            <person name="Rocha E."/>
            <person name="Roche B."/>
            <person name="Rose M."/>
            <person name="Sadaie Y."/>
            <person name="Sato T."/>
            <person name="Scanlan E."/>
            <person name="Schleich S."/>
            <person name="Schroeter R."/>
            <person name="Scoffone F."/>
            <person name="Sekiguchi J."/>
            <person name="Sekowska A."/>
            <person name="Seror S.J."/>
            <person name="Serror P."/>
            <person name="Shin B.-S."/>
            <person name="Soldo B."/>
            <person name="Sorokin A."/>
            <person name="Tacconi E."/>
            <person name="Takagi T."/>
            <person name="Takahashi H."/>
            <person name="Takemaru K."/>
            <person name="Takeuchi M."/>
            <person name="Tamakoshi A."/>
            <person name="Tanaka T."/>
            <person name="Terpstra P."/>
            <person name="Tognoni A."/>
            <person name="Tosato V."/>
            <person name="Uchiyama S."/>
            <person name="Vandenbol M."/>
            <person name="Vannier F."/>
            <person name="Vassarotti A."/>
            <person name="Viari A."/>
            <person name="Wambutt R."/>
            <person name="Wedler E."/>
            <person name="Wedler H."/>
            <person name="Weitzenegger T."/>
            <person name="Winters P."/>
            <person name="Wipat A."/>
            <person name="Yamamoto H."/>
            <person name="Yamane K."/>
            <person name="Yasumoto K."/>
            <person name="Yata K."/>
            <person name="Yoshida K."/>
            <person name="Yoshikawa H.-F."/>
            <person name="Zumstein E."/>
            <person name="Yoshikawa H."/>
            <person name="Danchin A."/>
        </authorList>
    </citation>
    <scope>NUCLEOTIDE SEQUENCE [LARGE SCALE GENOMIC DNA]</scope>
    <source>
        <strain>168</strain>
    </source>
</reference>
<organism>
    <name type="scientific">Bacillus subtilis (strain 168)</name>
    <dbReference type="NCBI Taxonomy" id="224308"/>
    <lineage>
        <taxon>Bacteria</taxon>
        <taxon>Bacillati</taxon>
        <taxon>Bacillota</taxon>
        <taxon>Bacilli</taxon>
        <taxon>Bacillales</taxon>
        <taxon>Bacillaceae</taxon>
        <taxon>Bacillus</taxon>
    </lineage>
</organism>
<proteinExistence type="predicted"/>
<sequence length="172" mass="19555">MATYNAIIYSGGYSQTLRDFAGWTGDLLTTIQDMKLHAQEFNSPYDAAMKIIGNMYQFSLDDLFSDVDAINLANKTSVGANAQPLNIAIRDYYSNNDCMNRFTQFVNNRFDGSLDKIFSEAEYYLNTNLDPVVVPIRLAFKRAFDVEDYSEEIGKITAQAFRDVIEKKMISE</sequence>
<dbReference type="EMBL" id="AL009126">
    <property type="protein sequence ID" value="CAX52615.1"/>
    <property type="molecule type" value="Genomic_DNA"/>
</dbReference>
<dbReference type="RefSeq" id="WP_010886501.1">
    <property type="nucleotide sequence ID" value="NZ_OZ025638.1"/>
</dbReference>
<dbReference type="RefSeq" id="YP_003097724.1">
    <property type="nucleotide sequence ID" value="NC_000964.3"/>
</dbReference>
<dbReference type="SMR" id="C0H408"/>
<dbReference type="FunCoup" id="C0H408">
    <property type="interactions" value="1"/>
</dbReference>
<dbReference type="STRING" id="224308.BSU14072"/>
<dbReference type="PaxDb" id="224308-BSU14072"/>
<dbReference type="EnsemblBacteria" id="CAX52615">
    <property type="protein sequence ID" value="CAX52615"/>
    <property type="gene ID" value="BSU_14072"/>
</dbReference>
<dbReference type="GeneID" id="8303033"/>
<dbReference type="KEGG" id="bsu:BSU14072"/>
<dbReference type="PATRIC" id="fig|224308.43.peg.1492"/>
<dbReference type="eggNOG" id="COG3409">
    <property type="taxonomic scope" value="Bacteria"/>
</dbReference>
<dbReference type="InParanoid" id="C0H408"/>
<dbReference type="OrthoDB" id="1795295at2"/>
<dbReference type="BioCyc" id="BSUB:BSU14072-MONOMER"/>
<dbReference type="Proteomes" id="UP000001570">
    <property type="component" value="Chromosome"/>
</dbReference>